<accession>B3WED6</accession>
<keyword id="KW-0028">Amino-acid biosynthesis</keyword>
<keyword id="KW-0067">ATP-binding</keyword>
<keyword id="KW-0963">Cytoplasm</keyword>
<keyword id="KW-0328">Glycosyltransferase</keyword>
<keyword id="KW-0368">Histidine biosynthesis</keyword>
<keyword id="KW-0547">Nucleotide-binding</keyword>
<keyword id="KW-0808">Transferase</keyword>
<feature type="chain" id="PRO_1000135283" description="ATP phosphoribosyltransferase">
    <location>
        <begin position="1"/>
        <end position="211"/>
    </location>
</feature>
<organism>
    <name type="scientific">Lacticaseibacillus casei (strain BL23)</name>
    <name type="common">Lactobacillus casei</name>
    <dbReference type="NCBI Taxonomy" id="543734"/>
    <lineage>
        <taxon>Bacteria</taxon>
        <taxon>Bacillati</taxon>
        <taxon>Bacillota</taxon>
        <taxon>Bacilli</taxon>
        <taxon>Lactobacillales</taxon>
        <taxon>Lactobacillaceae</taxon>
        <taxon>Lacticaseibacillus</taxon>
    </lineage>
</organism>
<reference key="1">
    <citation type="submission" date="2008-06" db="EMBL/GenBank/DDBJ databases">
        <title>Lactobacillus casei BL23 complete genome sequence.</title>
        <authorList>
            <person name="Maze A."/>
            <person name="Boel G."/>
            <person name="Bourand A."/>
            <person name="Loux V."/>
            <person name="Gibrat J.F."/>
            <person name="Zuniga M."/>
            <person name="Hartke A."/>
            <person name="Deutscher J."/>
        </authorList>
    </citation>
    <scope>NUCLEOTIDE SEQUENCE [LARGE SCALE GENOMIC DNA]</scope>
    <source>
        <strain>BL23</strain>
    </source>
</reference>
<dbReference type="EC" id="2.4.2.17" evidence="1"/>
<dbReference type="EMBL" id="FM177140">
    <property type="protein sequence ID" value="CAQ66737.1"/>
    <property type="molecule type" value="Genomic_DNA"/>
</dbReference>
<dbReference type="SMR" id="B3WED6"/>
<dbReference type="KEGG" id="lcb:LCABL_16560"/>
<dbReference type="HOGENOM" id="CLU_038115_2_0_9"/>
<dbReference type="UniPathway" id="UPA00031">
    <property type="reaction ID" value="UER00006"/>
</dbReference>
<dbReference type="GO" id="GO:0005737">
    <property type="term" value="C:cytoplasm"/>
    <property type="evidence" value="ECO:0007669"/>
    <property type="project" value="UniProtKB-SubCell"/>
</dbReference>
<dbReference type="GO" id="GO:0005524">
    <property type="term" value="F:ATP binding"/>
    <property type="evidence" value="ECO:0007669"/>
    <property type="project" value="UniProtKB-KW"/>
</dbReference>
<dbReference type="GO" id="GO:0003879">
    <property type="term" value="F:ATP phosphoribosyltransferase activity"/>
    <property type="evidence" value="ECO:0007669"/>
    <property type="project" value="UniProtKB-UniRule"/>
</dbReference>
<dbReference type="GO" id="GO:0000105">
    <property type="term" value="P:L-histidine biosynthetic process"/>
    <property type="evidence" value="ECO:0007669"/>
    <property type="project" value="UniProtKB-UniRule"/>
</dbReference>
<dbReference type="CDD" id="cd13595">
    <property type="entry name" value="PBP2_HisGs"/>
    <property type="match status" value="1"/>
</dbReference>
<dbReference type="FunFam" id="3.40.190.10:FF:000008">
    <property type="entry name" value="ATP phosphoribosyltransferase"/>
    <property type="match status" value="1"/>
</dbReference>
<dbReference type="Gene3D" id="3.40.190.10">
    <property type="entry name" value="Periplasmic binding protein-like II"/>
    <property type="match status" value="2"/>
</dbReference>
<dbReference type="HAMAP" id="MF_01018">
    <property type="entry name" value="HisG_Short"/>
    <property type="match status" value="1"/>
</dbReference>
<dbReference type="InterPro" id="IPR013820">
    <property type="entry name" value="ATP_PRibTrfase_cat"/>
</dbReference>
<dbReference type="InterPro" id="IPR018198">
    <property type="entry name" value="ATP_PRibTrfase_CS"/>
</dbReference>
<dbReference type="InterPro" id="IPR001348">
    <property type="entry name" value="ATP_PRibTrfase_HisG"/>
</dbReference>
<dbReference type="InterPro" id="IPR024893">
    <property type="entry name" value="ATP_PRibTrfase_HisG_short"/>
</dbReference>
<dbReference type="NCBIfam" id="TIGR00070">
    <property type="entry name" value="hisG"/>
    <property type="match status" value="1"/>
</dbReference>
<dbReference type="PANTHER" id="PTHR21403:SF8">
    <property type="entry name" value="ATP PHOSPHORIBOSYLTRANSFERASE"/>
    <property type="match status" value="1"/>
</dbReference>
<dbReference type="PANTHER" id="PTHR21403">
    <property type="entry name" value="ATP PHOSPHORIBOSYLTRANSFERASE ATP-PRTASE"/>
    <property type="match status" value="1"/>
</dbReference>
<dbReference type="Pfam" id="PF01634">
    <property type="entry name" value="HisG"/>
    <property type="match status" value="1"/>
</dbReference>
<dbReference type="SUPFAM" id="SSF53850">
    <property type="entry name" value="Periplasmic binding protein-like II"/>
    <property type="match status" value="1"/>
</dbReference>
<dbReference type="PROSITE" id="PS01316">
    <property type="entry name" value="ATP_P_PHORIBOSYLTR"/>
    <property type="match status" value="1"/>
</dbReference>
<sequence>MTLTIALTKGRTETQVLPLLAAAGIHCEAIQAKSRRLIFADDPNFHFILVKAPDVLTYLNHGTVDIGIVGSDILAEQGHRQFDMLDLNTGRCRFILASTADFDPKQTKRKLIATKYPHIAQQYFQKQGEDVEIIKIEGSVELAPLTGMADAIVDITETGTTLRENHLKVFAELAPVSTHLVVNRLALKQKRTEIYQLIQSLQKVRPQEASL</sequence>
<name>HIS1_LACCB</name>
<comment type="function">
    <text evidence="1">Catalyzes the condensation of ATP and 5-phosphoribose 1-diphosphate to form N'-(5'-phosphoribosyl)-ATP (PR-ATP). Has a crucial role in the pathway because the rate of histidine biosynthesis seems to be controlled primarily by regulation of HisG enzymatic activity.</text>
</comment>
<comment type="catalytic activity">
    <reaction evidence="1">
        <text>1-(5-phospho-beta-D-ribosyl)-ATP + diphosphate = 5-phospho-alpha-D-ribose 1-diphosphate + ATP</text>
        <dbReference type="Rhea" id="RHEA:18473"/>
        <dbReference type="ChEBI" id="CHEBI:30616"/>
        <dbReference type="ChEBI" id="CHEBI:33019"/>
        <dbReference type="ChEBI" id="CHEBI:58017"/>
        <dbReference type="ChEBI" id="CHEBI:73183"/>
        <dbReference type="EC" id="2.4.2.17"/>
    </reaction>
</comment>
<comment type="pathway">
    <text evidence="1">Amino-acid biosynthesis; L-histidine biosynthesis; L-histidine from 5-phospho-alpha-D-ribose 1-diphosphate: step 1/9.</text>
</comment>
<comment type="subunit">
    <text evidence="1">Heteromultimer composed of HisG and HisZ subunits.</text>
</comment>
<comment type="subcellular location">
    <subcellularLocation>
        <location evidence="1">Cytoplasm</location>
    </subcellularLocation>
</comment>
<comment type="domain">
    <text>Lacks the C-terminal regulatory region which is replaced by HisZ.</text>
</comment>
<comment type="similarity">
    <text evidence="1">Belongs to the ATP phosphoribosyltransferase family. Short subfamily.</text>
</comment>
<proteinExistence type="inferred from homology"/>
<evidence type="ECO:0000255" key="1">
    <source>
        <dbReference type="HAMAP-Rule" id="MF_01018"/>
    </source>
</evidence>
<gene>
    <name evidence="1" type="primary">hisG</name>
    <name type="ordered locus">LCABL_16560</name>
</gene>
<protein>
    <recommendedName>
        <fullName evidence="1">ATP phosphoribosyltransferase</fullName>
        <shortName evidence="1">ATP-PRT</shortName>
        <shortName evidence="1">ATP-PRTase</shortName>
        <ecNumber evidence="1">2.4.2.17</ecNumber>
    </recommendedName>
</protein>